<organism>
    <name type="scientific">Brucella abortus biovar 1 (strain 9-941)</name>
    <dbReference type="NCBI Taxonomy" id="262698"/>
    <lineage>
        <taxon>Bacteria</taxon>
        <taxon>Pseudomonadati</taxon>
        <taxon>Pseudomonadota</taxon>
        <taxon>Alphaproteobacteria</taxon>
        <taxon>Hyphomicrobiales</taxon>
        <taxon>Brucellaceae</taxon>
        <taxon>Brucella/Ochrobactrum group</taxon>
        <taxon>Brucella</taxon>
    </lineage>
</organism>
<accession>Q57DY0</accession>
<evidence type="ECO:0000255" key="1">
    <source>
        <dbReference type="HAMAP-Rule" id="MF_00073"/>
    </source>
</evidence>
<comment type="function">
    <text evidence="1">Involved in transcription antitermination. Required for transcription of ribosomal RNA (rRNA) genes. Binds specifically to the boxA antiterminator sequence of the ribosomal RNA (rrn) operons.</text>
</comment>
<comment type="similarity">
    <text evidence="1">Belongs to the NusB family.</text>
</comment>
<keyword id="KW-0694">RNA-binding</keyword>
<keyword id="KW-0804">Transcription</keyword>
<keyword id="KW-0889">Transcription antitermination</keyword>
<keyword id="KW-0805">Transcription regulation</keyword>
<name>NUSB_BRUAB</name>
<proteinExistence type="inferred from homology"/>
<gene>
    <name evidence="1" type="primary">nusB</name>
    <name type="ordered locus">BruAb1_0786</name>
</gene>
<sequence>MNSIPEGRPTPNLPRTANKRGVARLAAVQALFQMDVAGTGVMEVVAEYEAFRLGKEVDGTQYLDADPQWFRAIVAGVVEDQLKLDPMIHQALTEDWPLSRLDSTLRAILRAGAWELKARKDVPTAVIVSEYVDIAKAFYTEDEPKLVNAVLDRLALVIRGESRGAKPRHKS</sequence>
<protein>
    <recommendedName>
        <fullName evidence="1">Transcription antitermination protein NusB</fullName>
    </recommendedName>
    <alternativeName>
        <fullName evidence="1">Antitermination factor NusB</fullName>
    </alternativeName>
</protein>
<dbReference type="EMBL" id="AE017223">
    <property type="protein sequence ID" value="AAX74154.1"/>
    <property type="molecule type" value="Genomic_DNA"/>
</dbReference>
<dbReference type="RefSeq" id="WP_002963907.1">
    <property type="nucleotide sequence ID" value="NC_006932.1"/>
</dbReference>
<dbReference type="SMR" id="Q57DY0"/>
<dbReference type="EnsemblBacteria" id="AAX74154">
    <property type="protein sequence ID" value="AAX74154"/>
    <property type="gene ID" value="BruAb1_0786"/>
</dbReference>
<dbReference type="GeneID" id="93016840"/>
<dbReference type="KEGG" id="bmb:BruAb1_0786"/>
<dbReference type="HOGENOM" id="CLU_087843_4_0_5"/>
<dbReference type="Proteomes" id="UP000000540">
    <property type="component" value="Chromosome I"/>
</dbReference>
<dbReference type="GO" id="GO:0005829">
    <property type="term" value="C:cytosol"/>
    <property type="evidence" value="ECO:0007669"/>
    <property type="project" value="TreeGrafter"/>
</dbReference>
<dbReference type="GO" id="GO:0003723">
    <property type="term" value="F:RNA binding"/>
    <property type="evidence" value="ECO:0007669"/>
    <property type="project" value="UniProtKB-UniRule"/>
</dbReference>
<dbReference type="GO" id="GO:0006353">
    <property type="term" value="P:DNA-templated transcription termination"/>
    <property type="evidence" value="ECO:0007669"/>
    <property type="project" value="UniProtKB-UniRule"/>
</dbReference>
<dbReference type="GO" id="GO:0031564">
    <property type="term" value="P:transcription antitermination"/>
    <property type="evidence" value="ECO:0007669"/>
    <property type="project" value="UniProtKB-KW"/>
</dbReference>
<dbReference type="Gene3D" id="1.10.940.10">
    <property type="entry name" value="NusB-like"/>
    <property type="match status" value="1"/>
</dbReference>
<dbReference type="HAMAP" id="MF_00073">
    <property type="entry name" value="NusB"/>
    <property type="match status" value="1"/>
</dbReference>
<dbReference type="InterPro" id="IPR035926">
    <property type="entry name" value="NusB-like_sf"/>
</dbReference>
<dbReference type="InterPro" id="IPR011605">
    <property type="entry name" value="NusB_fam"/>
</dbReference>
<dbReference type="InterPro" id="IPR006027">
    <property type="entry name" value="NusB_RsmB_TIM44"/>
</dbReference>
<dbReference type="NCBIfam" id="TIGR01951">
    <property type="entry name" value="nusB"/>
    <property type="match status" value="1"/>
</dbReference>
<dbReference type="PANTHER" id="PTHR11078:SF3">
    <property type="entry name" value="ANTITERMINATION NUSB DOMAIN-CONTAINING PROTEIN"/>
    <property type="match status" value="1"/>
</dbReference>
<dbReference type="PANTHER" id="PTHR11078">
    <property type="entry name" value="N UTILIZATION SUBSTANCE PROTEIN B-RELATED"/>
    <property type="match status" value="1"/>
</dbReference>
<dbReference type="Pfam" id="PF01029">
    <property type="entry name" value="NusB"/>
    <property type="match status" value="1"/>
</dbReference>
<dbReference type="SUPFAM" id="SSF48013">
    <property type="entry name" value="NusB-like"/>
    <property type="match status" value="1"/>
</dbReference>
<reference key="1">
    <citation type="journal article" date="2005" name="J. Bacteriol.">
        <title>Completion of the genome sequence of Brucella abortus and comparison to the highly similar genomes of Brucella melitensis and Brucella suis.</title>
        <authorList>
            <person name="Halling S.M."/>
            <person name="Peterson-Burch B.D."/>
            <person name="Bricker B.J."/>
            <person name="Zuerner R.L."/>
            <person name="Qing Z."/>
            <person name="Li L.-L."/>
            <person name="Kapur V."/>
            <person name="Alt D.P."/>
            <person name="Olsen S.C."/>
        </authorList>
    </citation>
    <scope>NUCLEOTIDE SEQUENCE [LARGE SCALE GENOMIC DNA]</scope>
    <source>
        <strain>9-941</strain>
    </source>
</reference>
<feature type="chain" id="PRO_0000265493" description="Transcription antitermination protein NusB">
    <location>
        <begin position="1"/>
        <end position="171"/>
    </location>
</feature>